<keyword id="KW-0597">Phosphoprotein</keyword>
<keyword id="KW-1185">Reference proteome</keyword>
<protein>
    <recommendedName>
        <fullName>Uncharacterized protein C18B11.06</fullName>
    </recommendedName>
</protein>
<accession>Q09713</accession>
<reference key="1">
    <citation type="journal article" date="2002" name="Nature">
        <title>The genome sequence of Schizosaccharomyces pombe.</title>
        <authorList>
            <person name="Wood V."/>
            <person name="Gwilliam R."/>
            <person name="Rajandream M.A."/>
            <person name="Lyne M.H."/>
            <person name="Lyne R."/>
            <person name="Stewart A."/>
            <person name="Sgouros J.G."/>
            <person name="Peat N."/>
            <person name="Hayles J."/>
            <person name="Baker S.G."/>
            <person name="Basham D."/>
            <person name="Bowman S."/>
            <person name="Brooks K."/>
            <person name="Brown D."/>
            <person name="Brown S."/>
            <person name="Chillingworth T."/>
            <person name="Churcher C.M."/>
            <person name="Collins M."/>
            <person name="Connor R."/>
            <person name="Cronin A."/>
            <person name="Davis P."/>
            <person name="Feltwell T."/>
            <person name="Fraser A."/>
            <person name="Gentles S."/>
            <person name="Goble A."/>
            <person name="Hamlin N."/>
            <person name="Harris D.E."/>
            <person name="Hidalgo J."/>
            <person name="Hodgson G."/>
            <person name="Holroyd S."/>
            <person name="Hornsby T."/>
            <person name="Howarth S."/>
            <person name="Huckle E.J."/>
            <person name="Hunt S."/>
            <person name="Jagels K."/>
            <person name="James K.D."/>
            <person name="Jones L."/>
            <person name="Jones M."/>
            <person name="Leather S."/>
            <person name="McDonald S."/>
            <person name="McLean J."/>
            <person name="Mooney P."/>
            <person name="Moule S."/>
            <person name="Mungall K.L."/>
            <person name="Murphy L.D."/>
            <person name="Niblett D."/>
            <person name="Odell C."/>
            <person name="Oliver K."/>
            <person name="O'Neil S."/>
            <person name="Pearson D."/>
            <person name="Quail M.A."/>
            <person name="Rabbinowitsch E."/>
            <person name="Rutherford K.M."/>
            <person name="Rutter S."/>
            <person name="Saunders D."/>
            <person name="Seeger K."/>
            <person name="Sharp S."/>
            <person name="Skelton J."/>
            <person name="Simmonds M.N."/>
            <person name="Squares R."/>
            <person name="Squares S."/>
            <person name="Stevens K."/>
            <person name="Taylor K."/>
            <person name="Taylor R.G."/>
            <person name="Tivey A."/>
            <person name="Walsh S.V."/>
            <person name="Warren T."/>
            <person name="Whitehead S."/>
            <person name="Woodward J.R."/>
            <person name="Volckaert G."/>
            <person name="Aert R."/>
            <person name="Robben J."/>
            <person name="Grymonprez B."/>
            <person name="Weltjens I."/>
            <person name="Vanstreels E."/>
            <person name="Rieger M."/>
            <person name="Schaefer M."/>
            <person name="Mueller-Auer S."/>
            <person name="Gabel C."/>
            <person name="Fuchs M."/>
            <person name="Duesterhoeft A."/>
            <person name="Fritzc C."/>
            <person name="Holzer E."/>
            <person name="Moestl D."/>
            <person name="Hilbert H."/>
            <person name="Borzym K."/>
            <person name="Langer I."/>
            <person name="Beck A."/>
            <person name="Lehrach H."/>
            <person name="Reinhardt R."/>
            <person name="Pohl T.M."/>
            <person name="Eger P."/>
            <person name="Zimmermann W."/>
            <person name="Wedler H."/>
            <person name="Wambutt R."/>
            <person name="Purnelle B."/>
            <person name="Goffeau A."/>
            <person name="Cadieu E."/>
            <person name="Dreano S."/>
            <person name="Gloux S."/>
            <person name="Lelaure V."/>
            <person name="Mottier S."/>
            <person name="Galibert F."/>
            <person name="Aves S.J."/>
            <person name="Xiang Z."/>
            <person name="Hunt C."/>
            <person name="Moore K."/>
            <person name="Hurst S.M."/>
            <person name="Lucas M."/>
            <person name="Rochet M."/>
            <person name="Gaillardin C."/>
            <person name="Tallada V.A."/>
            <person name="Garzon A."/>
            <person name="Thode G."/>
            <person name="Daga R.R."/>
            <person name="Cruzado L."/>
            <person name="Jimenez J."/>
            <person name="Sanchez M."/>
            <person name="del Rey F."/>
            <person name="Benito J."/>
            <person name="Dominguez A."/>
            <person name="Revuelta J.L."/>
            <person name="Moreno S."/>
            <person name="Armstrong J."/>
            <person name="Forsburg S.L."/>
            <person name="Cerutti L."/>
            <person name="Lowe T."/>
            <person name="McCombie W.R."/>
            <person name="Paulsen I."/>
            <person name="Potashkin J."/>
            <person name="Shpakovski G.V."/>
            <person name="Ussery D."/>
            <person name="Barrell B.G."/>
            <person name="Nurse P."/>
        </authorList>
    </citation>
    <scope>NUCLEOTIDE SEQUENCE [LARGE SCALE GENOMIC DNA]</scope>
    <source>
        <strain>972 / ATCC 24843</strain>
    </source>
</reference>
<reference key="2">
    <citation type="journal article" date="2008" name="J. Proteome Res.">
        <title>Phosphoproteome analysis of fission yeast.</title>
        <authorList>
            <person name="Wilson-Grady J.T."/>
            <person name="Villen J."/>
            <person name="Gygi S.P."/>
        </authorList>
    </citation>
    <scope>PHOSPHORYLATION [LARGE SCALE ANALYSIS] AT SER-153; SER-154 AND SER-309</scope>
    <scope>IDENTIFICATION BY MASS SPECTROMETRY</scope>
</reference>
<feature type="chain" id="PRO_0000116388" description="Uncharacterized protein C18B11.06">
    <location>
        <begin position="1"/>
        <end position="327"/>
    </location>
</feature>
<feature type="region of interest" description="Disordered" evidence="1">
    <location>
        <begin position="127"/>
        <end position="170"/>
    </location>
</feature>
<feature type="region of interest" description="Disordered" evidence="1">
    <location>
        <begin position="298"/>
        <end position="327"/>
    </location>
</feature>
<feature type="compositionally biased region" description="Basic residues" evidence="1">
    <location>
        <begin position="317"/>
        <end position="327"/>
    </location>
</feature>
<feature type="modified residue" description="Phosphoserine" evidence="2">
    <location>
        <position position="153"/>
    </location>
</feature>
<feature type="modified residue" description="Phosphoserine" evidence="2">
    <location>
        <position position="154"/>
    </location>
</feature>
<feature type="modified residue" description="Phosphoserine" evidence="2">
    <location>
        <position position="309"/>
    </location>
</feature>
<gene>
    <name type="ORF">SPAC18B11.06</name>
</gene>
<name>YA36_SCHPO</name>
<dbReference type="EMBL" id="CU329670">
    <property type="protein sequence ID" value="CAA90591.1"/>
    <property type="molecule type" value="Genomic_DNA"/>
</dbReference>
<dbReference type="PIR" id="T37908">
    <property type="entry name" value="S58305"/>
</dbReference>
<dbReference type="SMR" id="Q09713"/>
<dbReference type="BioGRID" id="279042">
    <property type="interactions" value="1"/>
</dbReference>
<dbReference type="FunCoup" id="Q09713">
    <property type="interactions" value="948"/>
</dbReference>
<dbReference type="STRING" id="284812.Q09713"/>
<dbReference type="iPTMnet" id="Q09713"/>
<dbReference type="PaxDb" id="4896-SPAC18B11.06.1"/>
<dbReference type="EnsemblFungi" id="SPAC18B11.06.1">
    <property type="protein sequence ID" value="SPAC18B11.06.1:pep"/>
    <property type="gene ID" value="SPAC18B11.06"/>
</dbReference>
<dbReference type="KEGG" id="spo:2542587"/>
<dbReference type="PomBase" id="SPAC18B11.06"/>
<dbReference type="VEuPathDB" id="FungiDB:SPAC18B11.06"/>
<dbReference type="eggNOG" id="KOG3117">
    <property type="taxonomic scope" value="Eukaryota"/>
</dbReference>
<dbReference type="HOGENOM" id="CLU_065858_0_0_1"/>
<dbReference type="InParanoid" id="Q09713"/>
<dbReference type="OMA" id="RHTKSER"/>
<dbReference type="PhylomeDB" id="Q09713"/>
<dbReference type="PRO" id="PR:Q09713"/>
<dbReference type="Proteomes" id="UP000002485">
    <property type="component" value="Chromosome I"/>
</dbReference>
<dbReference type="GO" id="GO:0005730">
    <property type="term" value="C:nucleolus"/>
    <property type="evidence" value="ECO:0000318"/>
    <property type="project" value="GO_Central"/>
</dbReference>
<dbReference type="GO" id="GO:0005634">
    <property type="term" value="C:nucleus"/>
    <property type="evidence" value="ECO:0007005"/>
    <property type="project" value="PomBase"/>
</dbReference>
<dbReference type="GO" id="GO:0032040">
    <property type="term" value="C:small-subunit processome"/>
    <property type="evidence" value="ECO:0000318"/>
    <property type="project" value="GO_Central"/>
</dbReference>
<dbReference type="GO" id="GO:0005732">
    <property type="term" value="C:sno(s)RNA-containing ribonucleoprotein complex"/>
    <property type="evidence" value="ECO:0000266"/>
    <property type="project" value="PomBase"/>
</dbReference>
<dbReference type="GO" id="GO:0003723">
    <property type="term" value="F:RNA binding"/>
    <property type="evidence" value="ECO:0000266"/>
    <property type="project" value="PomBase"/>
</dbReference>
<dbReference type="GO" id="GO:0000462">
    <property type="term" value="P:maturation of SSU-rRNA from tricistronic rRNA transcript (SSU-rRNA, 5.8S rRNA, LSU-rRNA)"/>
    <property type="evidence" value="ECO:0000318"/>
    <property type="project" value="GO_Central"/>
</dbReference>
<dbReference type="InterPro" id="IPR007146">
    <property type="entry name" value="Sas10/Utp3/C1D"/>
</dbReference>
<dbReference type="PANTHER" id="PTHR13237:SF9">
    <property type="entry name" value="NEUROGUIDIN"/>
    <property type="match status" value="1"/>
</dbReference>
<dbReference type="PANTHER" id="PTHR13237">
    <property type="entry name" value="SOMETHING ABOUT SILENCING PROTEIN 10-RELATED"/>
    <property type="match status" value="1"/>
</dbReference>
<dbReference type="Pfam" id="PF04000">
    <property type="entry name" value="Sas10_Utp3"/>
    <property type="match status" value="1"/>
</dbReference>
<organism>
    <name type="scientific">Schizosaccharomyces pombe (strain 972 / ATCC 24843)</name>
    <name type="common">Fission yeast</name>
    <dbReference type="NCBI Taxonomy" id="284812"/>
    <lineage>
        <taxon>Eukaryota</taxon>
        <taxon>Fungi</taxon>
        <taxon>Dikarya</taxon>
        <taxon>Ascomycota</taxon>
        <taxon>Taphrinomycotina</taxon>
        <taxon>Schizosaccharomycetes</taxon>
        <taxon>Schizosaccharomycetales</taxon>
        <taxon>Schizosaccharomycetaceae</taxon>
        <taxon>Schizosaccharomyces</taxon>
    </lineage>
</organism>
<evidence type="ECO:0000256" key="1">
    <source>
        <dbReference type="SAM" id="MobiDB-lite"/>
    </source>
</evidence>
<evidence type="ECO:0000269" key="2">
    <source>
    </source>
</evidence>
<proteinExistence type="evidence at protein level"/>
<sequence length="327" mass="37645">MDVLNKSIQTALEALPKTSSSSSDGVSLVSLKCQLLLSYVQKLAFLMLVKLDDESFLQHQDVVEKLVQLRIEIEKIRPLENRIQYSVDKLLRAAGRKEEIGSIKEPENNGNDKDSQDSLKLHYKPNLSEFADDSDGPASENNVVKEDDKSSISSEDEEEELRSAKDGIYRPPRIRAVTMDSEKRTRHRPNHLVDEFVSSDMSSVPQSMPSVGSNLEKRGRVIHADERELQKMRERIEYEESNYTRLPKLSKKDLKKSKRVKKHDYGGEDWSLLDRKFHDDDFSNRKLDLTSRAKRRANFEDVNDGSLASPVQIGQSYRKRKKNLKRR</sequence>